<proteinExistence type="inferred from homology"/>
<gene>
    <name evidence="1" type="primary">glgC</name>
    <name type="ordered locus">Arad_3871</name>
</gene>
<comment type="function">
    <text evidence="1">Involved in the biosynthesis of ADP-glucose, a building block required for the elongation reactions to produce glycogen. Catalyzes the reaction between ATP and alpha-D-glucose 1-phosphate (G1P) to produce pyrophosphate and ADP-Glc.</text>
</comment>
<comment type="catalytic activity">
    <reaction evidence="1">
        <text>alpha-D-glucose 1-phosphate + ATP + H(+) = ADP-alpha-D-glucose + diphosphate</text>
        <dbReference type="Rhea" id="RHEA:12120"/>
        <dbReference type="ChEBI" id="CHEBI:15378"/>
        <dbReference type="ChEBI" id="CHEBI:30616"/>
        <dbReference type="ChEBI" id="CHEBI:33019"/>
        <dbReference type="ChEBI" id="CHEBI:57498"/>
        <dbReference type="ChEBI" id="CHEBI:58601"/>
        <dbReference type="EC" id="2.7.7.27"/>
    </reaction>
</comment>
<comment type="pathway">
    <text evidence="1">Glycan biosynthesis; glycogen biosynthesis.</text>
</comment>
<comment type="subunit">
    <text evidence="1">Homotetramer.</text>
</comment>
<comment type="similarity">
    <text evidence="1">Belongs to the bacterial/plant glucose-1-phosphate adenylyltransferase family.</text>
</comment>
<reference key="1">
    <citation type="journal article" date="2009" name="J. Bacteriol.">
        <title>Genome sequences of three Agrobacterium biovars help elucidate the evolution of multichromosome genomes in bacteria.</title>
        <authorList>
            <person name="Slater S.C."/>
            <person name="Goldman B.S."/>
            <person name="Goodner B."/>
            <person name="Setubal J.C."/>
            <person name="Farrand S.K."/>
            <person name="Nester E.W."/>
            <person name="Burr T.J."/>
            <person name="Banta L."/>
            <person name="Dickerman A.W."/>
            <person name="Paulsen I."/>
            <person name="Otten L."/>
            <person name="Suen G."/>
            <person name="Welch R."/>
            <person name="Almeida N.F."/>
            <person name="Arnold F."/>
            <person name="Burton O.T."/>
            <person name="Du Z."/>
            <person name="Ewing A."/>
            <person name="Godsy E."/>
            <person name="Heisel S."/>
            <person name="Houmiel K.L."/>
            <person name="Jhaveri J."/>
            <person name="Lu J."/>
            <person name="Miller N.M."/>
            <person name="Norton S."/>
            <person name="Chen Q."/>
            <person name="Phoolcharoen W."/>
            <person name="Ohlin V."/>
            <person name="Ondrusek D."/>
            <person name="Pride N."/>
            <person name="Stricklin S.L."/>
            <person name="Sun J."/>
            <person name="Wheeler C."/>
            <person name="Wilson L."/>
            <person name="Zhu H."/>
            <person name="Wood D.W."/>
        </authorList>
    </citation>
    <scope>NUCLEOTIDE SEQUENCE [LARGE SCALE GENOMIC DNA]</scope>
    <source>
        <strain>K84 / ATCC BAA-868</strain>
    </source>
</reference>
<organism>
    <name type="scientific">Rhizobium rhizogenes (strain K84 / ATCC BAA-868)</name>
    <name type="common">Agrobacterium radiobacter</name>
    <dbReference type="NCBI Taxonomy" id="311403"/>
    <lineage>
        <taxon>Bacteria</taxon>
        <taxon>Pseudomonadati</taxon>
        <taxon>Pseudomonadota</taxon>
        <taxon>Alphaproteobacteria</taxon>
        <taxon>Hyphomicrobiales</taxon>
        <taxon>Rhizobiaceae</taxon>
        <taxon>Rhizobium/Agrobacterium group</taxon>
        <taxon>Rhizobium</taxon>
    </lineage>
</organism>
<sequence>MVEKRFQPLARDAMAYVLAGGRGSRLKELTDRRAKPAVYFGGKTRIIDFALSNALNSGIRRIGVATQYKAHSLIRHMQRGWNFFRPERNESFDILPASQRVSETQWYEGTADAVYQNIDIIEPYGPEYMVILAGDHIYKMDYEWMLQQHVDSGAEVTIGCLEVPRMEAVGFGVMHVDEKDQIIDFVEKPADPPGIPGNPDFALASMGIYVFHTKFLIECLKRDAADPNSSRDFGKDIIPYIVKNGKAVAHRFAQSCVRSDFEREAYWRDVGTIDAYWQANIDLTAVVPELDIYDKSWPIWTYAEISPPAKFVHDDENRRGSAVSSVVAGDCIISGASLSNSLLFTGVRANSYSKLEGAVVLPSVKVGRHAQLKNVVIDHGVNIPEGLVVGEDPQLDAKRFRRTESGICLITQTMIDKLDI</sequence>
<keyword id="KW-0067">ATP-binding</keyword>
<keyword id="KW-0119">Carbohydrate metabolism</keyword>
<keyword id="KW-0320">Glycogen biosynthesis</keyword>
<keyword id="KW-0321">Glycogen metabolism</keyword>
<keyword id="KW-0547">Nucleotide-binding</keyword>
<keyword id="KW-0548">Nucleotidyltransferase</keyword>
<keyword id="KW-0808">Transferase</keyword>
<feature type="chain" id="PRO_1000147216" description="Glucose-1-phosphate adenylyltransferase">
    <location>
        <begin position="1"/>
        <end position="420"/>
    </location>
</feature>
<feature type="binding site" evidence="1">
    <location>
        <position position="107"/>
    </location>
    <ligand>
        <name>alpha-D-glucose 1-phosphate</name>
        <dbReference type="ChEBI" id="CHEBI:58601"/>
    </ligand>
</feature>
<feature type="binding site" evidence="1">
    <location>
        <position position="172"/>
    </location>
    <ligand>
        <name>alpha-D-glucose 1-phosphate</name>
        <dbReference type="ChEBI" id="CHEBI:58601"/>
    </ligand>
</feature>
<feature type="binding site" evidence="1">
    <location>
        <begin position="187"/>
        <end position="188"/>
    </location>
    <ligand>
        <name>alpha-D-glucose 1-phosphate</name>
        <dbReference type="ChEBI" id="CHEBI:58601"/>
    </ligand>
</feature>
<feature type="binding site" evidence="1">
    <location>
        <position position="205"/>
    </location>
    <ligand>
        <name>alpha-D-glucose 1-phosphate</name>
        <dbReference type="ChEBI" id="CHEBI:58601"/>
    </ligand>
</feature>
<protein>
    <recommendedName>
        <fullName evidence="1">Glucose-1-phosphate adenylyltransferase</fullName>
        <ecNumber evidence="1">2.7.7.27</ecNumber>
    </recommendedName>
    <alternativeName>
        <fullName evidence="1">ADP-glucose pyrophosphorylase</fullName>
        <shortName evidence="1">ADPGlc PPase</shortName>
    </alternativeName>
    <alternativeName>
        <fullName evidence="1">ADP-glucose synthase</fullName>
    </alternativeName>
</protein>
<name>GLGC_RHIR8</name>
<accession>B9JAA3</accession>
<dbReference type="EC" id="2.7.7.27" evidence="1"/>
<dbReference type="EMBL" id="CP000628">
    <property type="protein sequence ID" value="ACM27718.1"/>
    <property type="molecule type" value="Genomic_DNA"/>
</dbReference>
<dbReference type="RefSeq" id="WP_007700968.1">
    <property type="nucleotide sequence ID" value="NC_011985.1"/>
</dbReference>
<dbReference type="SMR" id="B9JAA3"/>
<dbReference type="STRING" id="311403.Arad_3871"/>
<dbReference type="GeneID" id="86849573"/>
<dbReference type="KEGG" id="ara:Arad_3871"/>
<dbReference type="eggNOG" id="COG0448">
    <property type="taxonomic scope" value="Bacteria"/>
</dbReference>
<dbReference type="HOGENOM" id="CLU_029499_14_1_5"/>
<dbReference type="UniPathway" id="UPA00164"/>
<dbReference type="Proteomes" id="UP000001600">
    <property type="component" value="Chromosome 1"/>
</dbReference>
<dbReference type="GO" id="GO:0005524">
    <property type="term" value="F:ATP binding"/>
    <property type="evidence" value="ECO:0007669"/>
    <property type="project" value="UniProtKB-KW"/>
</dbReference>
<dbReference type="GO" id="GO:0008878">
    <property type="term" value="F:glucose-1-phosphate adenylyltransferase activity"/>
    <property type="evidence" value="ECO:0007669"/>
    <property type="project" value="UniProtKB-UniRule"/>
</dbReference>
<dbReference type="GO" id="GO:0005978">
    <property type="term" value="P:glycogen biosynthetic process"/>
    <property type="evidence" value="ECO:0007669"/>
    <property type="project" value="UniProtKB-UniRule"/>
</dbReference>
<dbReference type="CDD" id="cd02508">
    <property type="entry name" value="ADP_Glucose_PP"/>
    <property type="match status" value="1"/>
</dbReference>
<dbReference type="CDD" id="cd04651">
    <property type="entry name" value="LbH_G1P_AT_C"/>
    <property type="match status" value="1"/>
</dbReference>
<dbReference type="Gene3D" id="2.160.10.10">
    <property type="entry name" value="Hexapeptide repeat proteins"/>
    <property type="match status" value="1"/>
</dbReference>
<dbReference type="Gene3D" id="3.90.550.10">
    <property type="entry name" value="Spore Coat Polysaccharide Biosynthesis Protein SpsA, Chain A"/>
    <property type="match status" value="1"/>
</dbReference>
<dbReference type="HAMAP" id="MF_00624">
    <property type="entry name" value="GlgC"/>
    <property type="match status" value="1"/>
</dbReference>
<dbReference type="InterPro" id="IPR011831">
    <property type="entry name" value="ADP-Glc_PPase"/>
</dbReference>
<dbReference type="InterPro" id="IPR005836">
    <property type="entry name" value="ADP_Glu_pyroP_CS"/>
</dbReference>
<dbReference type="InterPro" id="IPR023049">
    <property type="entry name" value="GlgC_bac"/>
</dbReference>
<dbReference type="InterPro" id="IPR056818">
    <property type="entry name" value="GlmU/GlgC-like_hexapep"/>
</dbReference>
<dbReference type="InterPro" id="IPR005835">
    <property type="entry name" value="NTP_transferase_dom"/>
</dbReference>
<dbReference type="InterPro" id="IPR029044">
    <property type="entry name" value="Nucleotide-diphossugar_trans"/>
</dbReference>
<dbReference type="InterPro" id="IPR011004">
    <property type="entry name" value="Trimer_LpxA-like_sf"/>
</dbReference>
<dbReference type="NCBIfam" id="TIGR02091">
    <property type="entry name" value="glgC"/>
    <property type="match status" value="1"/>
</dbReference>
<dbReference type="NCBIfam" id="NF001947">
    <property type="entry name" value="PRK00725.1"/>
    <property type="match status" value="1"/>
</dbReference>
<dbReference type="NCBIfam" id="NF002023">
    <property type="entry name" value="PRK00844.1"/>
    <property type="match status" value="1"/>
</dbReference>
<dbReference type="PANTHER" id="PTHR43523:SF2">
    <property type="entry name" value="GLUCOSE-1-PHOSPHATE ADENYLYLTRANSFERASE"/>
    <property type="match status" value="1"/>
</dbReference>
<dbReference type="PANTHER" id="PTHR43523">
    <property type="entry name" value="GLUCOSE-1-PHOSPHATE ADENYLYLTRANSFERASE-RELATED"/>
    <property type="match status" value="1"/>
</dbReference>
<dbReference type="Pfam" id="PF24894">
    <property type="entry name" value="Hexapep_GlmU"/>
    <property type="match status" value="1"/>
</dbReference>
<dbReference type="Pfam" id="PF00483">
    <property type="entry name" value="NTP_transferase"/>
    <property type="match status" value="1"/>
</dbReference>
<dbReference type="SUPFAM" id="SSF53448">
    <property type="entry name" value="Nucleotide-diphospho-sugar transferases"/>
    <property type="match status" value="1"/>
</dbReference>
<dbReference type="SUPFAM" id="SSF51161">
    <property type="entry name" value="Trimeric LpxA-like enzymes"/>
    <property type="match status" value="1"/>
</dbReference>
<dbReference type="PROSITE" id="PS00808">
    <property type="entry name" value="ADP_GLC_PYROPHOSPH_1"/>
    <property type="match status" value="1"/>
</dbReference>
<dbReference type="PROSITE" id="PS00809">
    <property type="entry name" value="ADP_GLC_PYROPHOSPH_2"/>
    <property type="match status" value="1"/>
</dbReference>
<dbReference type="PROSITE" id="PS00810">
    <property type="entry name" value="ADP_GLC_PYROPHOSPH_3"/>
    <property type="match status" value="1"/>
</dbReference>
<evidence type="ECO:0000255" key="1">
    <source>
        <dbReference type="HAMAP-Rule" id="MF_00624"/>
    </source>
</evidence>